<accession>P50837</accession>
<accession>Q45679</accession>
<organism>
    <name type="scientific">Bacillus subtilis (strain 168)</name>
    <dbReference type="NCBI Taxonomy" id="224308"/>
    <lineage>
        <taxon>Bacteria</taxon>
        <taxon>Bacillati</taxon>
        <taxon>Bacillota</taxon>
        <taxon>Bacilli</taxon>
        <taxon>Bacillales</taxon>
        <taxon>Bacillaceae</taxon>
        <taxon>Bacillus</taxon>
    </lineage>
</organism>
<feature type="chain" id="PRO_0000049723" description="Uncharacterized protein YprB">
    <location>
        <begin position="1"/>
        <end position="413"/>
    </location>
</feature>
<feature type="helix" evidence="1">
    <location>
        <begin position="38"/>
        <end position="43"/>
    </location>
</feature>
<feature type="strand" evidence="1">
    <location>
        <begin position="46"/>
        <end position="51"/>
    </location>
</feature>
<feature type="strand" evidence="1">
    <location>
        <begin position="54"/>
        <end position="64"/>
    </location>
</feature>
<feature type="helix" evidence="1">
    <location>
        <begin position="76"/>
        <end position="85"/>
    </location>
</feature>
<feature type="helix" evidence="1">
    <location>
        <begin position="100"/>
        <end position="102"/>
    </location>
</feature>
<feature type="strand" evidence="1">
    <location>
        <begin position="104"/>
        <end position="110"/>
    </location>
</feature>
<feature type="strand" evidence="1">
    <location>
        <begin position="121"/>
        <end position="129"/>
    </location>
</feature>
<feature type="strand" evidence="1">
    <location>
        <begin position="131"/>
        <end position="140"/>
    </location>
</feature>
<feature type="helix" evidence="1">
    <location>
        <begin position="147"/>
        <end position="157"/>
    </location>
</feature>
<feature type="strand" evidence="1">
    <location>
        <begin position="162"/>
        <end position="165"/>
    </location>
</feature>
<feature type="helix" evidence="1">
    <location>
        <begin position="181"/>
        <end position="184"/>
    </location>
</feature>
<feature type="helix" evidence="1">
    <location>
        <begin position="187"/>
        <end position="189"/>
    </location>
</feature>
<feature type="strand" evidence="1">
    <location>
        <begin position="195"/>
        <end position="197"/>
    </location>
</feature>
<feature type="turn" evidence="1">
    <location>
        <begin position="198"/>
        <end position="201"/>
    </location>
</feature>
<feature type="helix" evidence="1">
    <location>
        <begin position="215"/>
        <end position="221"/>
    </location>
</feature>
<feature type="helix" evidence="1">
    <location>
        <begin position="233"/>
        <end position="235"/>
    </location>
</feature>
<feature type="helix" evidence="1">
    <location>
        <begin position="236"/>
        <end position="246"/>
    </location>
</feature>
<feature type="helix" evidence="1">
    <location>
        <begin position="249"/>
        <end position="251"/>
    </location>
</feature>
<feature type="helix" evidence="1">
    <location>
        <begin position="253"/>
        <end position="278"/>
    </location>
</feature>
<sequence>MSLKGKLQRMKKHMALDEGEQKIEAGKQENHFDDIPFLEEWEAFGMKPFIFEDEYCLIREVEYPLSHRHGLYSFSELEEVITLWNQSGLSHTLSAKGYNKNNLFFFDTETTGLGGGAGNTIFLLGHARVYEDRVTVKQHLLPKPGNEVALYQSFLSEVDITSLVTYNGKAFDWPQVKTRHTLIRDRLPKLPEFGHFDLLHGARRLWKHKMDRVSLGTVEKEELGIRRLEDTPGYLAPMLYFHFIKAQEPDLLKGVLHHNEMDVLSLISLYIHMSKKILSESHAPKEHSEAYAMAKWFMAHKETDQAIKQLERLIEKSFEDQDSARLDLSLLYKKQNRLEEAVPLWEKLSRSQNQKCRYAAVIELAKYFEHKKKEFGKALQVAEQSLSDAACLSEKETEKLHVRIARLKRKYSS</sequence>
<proteinExistence type="evidence at protein level"/>
<keyword id="KW-0002">3D-structure</keyword>
<keyword id="KW-1185">Reference proteome</keyword>
<protein>
    <recommendedName>
        <fullName>Uncharacterized protein YprB</fullName>
    </recommendedName>
</protein>
<dbReference type="EMBL" id="L47838">
    <property type="protein sequence ID" value="AAB38469.1"/>
    <property type="molecule type" value="Genomic_DNA"/>
</dbReference>
<dbReference type="EMBL" id="AL009126">
    <property type="protein sequence ID" value="CAB14138.1"/>
    <property type="molecule type" value="Genomic_DNA"/>
</dbReference>
<dbReference type="EMBL" id="M22908">
    <property type="protein sequence ID" value="AAA22824.1"/>
    <property type="status" value="ALT_SEQ"/>
    <property type="molecule type" value="Genomic_DNA"/>
</dbReference>
<dbReference type="PIR" id="C69941">
    <property type="entry name" value="C69941"/>
</dbReference>
<dbReference type="RefSeq" id="NP_390103.1">
    <property type="nucleotide sequence ID" value="NC_000964.3"/>
</dbReference>
<dbReference type="RefSeq" id="WP_004398813.1">
    <property type="nucleotide sequence ID" value="NZ_OZ025638.1"/>
</dbReference>
<dbReference type="PDB" id="8UN9">
    <property type="method" value="X-ray"/>
    <property type="resolution" value="2.10 A"/>
    <property type="chains" value="A/B=33-279"/>
</dbReference>
<dbReference type="PDBsum" id="8UN9"/>
<dbReference type="SMR" id="P50837"/>
<dbReference type="FunCoup" id="P50837">
    <property type="interactions" value="5"/>
</dbReference>
<dbReference type="STRING" id="224308.BSU22210"/>
<dbReference type="PaxDb" id="224308-BSU22210"/>
<dbReference type="EnsemblBacteria" id="CAB14138">
    <property type="protein sequence ID" value="CAB14138"/>
    <property type="gene ID" value="BSU_22210"/>
</dbReference>
<dbReference type="GeneID" id="939050"/>
<dbReference type="KEGG" id="bsu:BSU22210"/>
<dbReference type="PATRIC" id="fig|224308.179.peg.2425"/>
<dbReference type="eggNOG" id="COG3359">
    <property type="taxonomic scope" value="Bacteria"/>
</dbReference>
<dbReference type="InParanoid" id="P50837"/>
<dbReference type="OrthoDB" id="9790530at2"/>
<dbReference type="BioCyc" id="BSUB:BSU22210-MONOMER"/>
<dbReference type="Proteomes" id="UP000001570">
    <property type="component" value="Chromosome"/>
</dbReference>
<dbReference type="Gene3D" id="1.25.40.10">
    <property type="entry name" value="Tetratricopeptide repeat domain"/>
    <property type="match status" value="1"/>
</dbReference>
<dbReference type="InterPro" id="IPR012337">
    <property type="entry name" value="RNaseH-like_sf"/>
</dbReference>
<dbReference type="InterPro" id="IPR011990">
    <property type="entry name" value="TPR-like_helical_dom_sf"/>
</dbReference>
<dbReference type="InterPro" id="IPR038720">
    <property type="entry name" value="YprB_RNase_H-like_dom"/>
</dbReference>
<dbReference type="PANTHER" id="PTHR38462">
    <property type="entry name" value="EXONUCLEASE-LIKE PROTEIN"/>
    <property type="match status" value="1"/>
</dbReference>
<dbReference type="PANTHER" id="PTHR38462:SF1">
    <property type="entry name" value="YPRB RIBONUCLEASE H-LIKE DOMAIN-CONTAINING PROTEIN"/>
    <property type="match status" value="1"/>
</dbReference>
<dbReference type="Pfam" id="PF13482">
    <property type="entry name" value="RNase_H_2"/>
    <property type="match status" value="1"/>
</dbReference>
<dbReference type="SUPFAM" id="SSF53098">
    <property type="entry name" value="Ribonuclease H-like"/>
    <property type="match status" value="1"/>
</dbReference>
<dbReference type="SUPFAM" id="SSF48452">
    <property type="entry name" value="TPR-like"/>
    <property type="match status" value="1"/>
</dbReference>
<reference key="1">
    <citation type="journal article" date="1996" name="Microbiology">
        <title>Sequence analysis of the Bacillus subtilis chromosome region between the serA and kdg loci cloned in a yeast artificial chromosome.</title>
        <authorList>
            <person name="Sorokin A.V."/>
            <person name="Azevedo V."/>
            <person name="Zumstein E."/>
            <person name="Galleron N."/>
            <person name="Ehrlich S.D."/>
            <person name="Serror P."/>
        </authorList>
    </citation>
    <scope>NUCLEOTIDE SEQUENCE [GENOMIC DNA]</scope>
    <source>
        <strain>168 / Marburg / ATCC 6051 / DSM 10 / JCM 1465 / NBRC 13719 / NCIMB 3610 / NRRL NRS-744 / VKM B-501</strain>
    </source>
</reference>
<reference key="2">
    <citation type="journal article" date="1997" name="Nature">
        <title>The complete genome sequence of the Gram-positive bacterium Bacillus subtilis.</title>
        <authorList>
            <person name="Kunst F."/>
            <person name="Ogasawara N."/>
            <person name="Moszer I."/>
            <person name="Albertini A.M."/>
            <person name="Alloni G."/>
            <person name="Azevedo V."/>
            <person name="Bertero M.G."/>
            <person name="Bessieres P."/>
            <person name="Bolotin A."/>
            <person name="Borchert S."/>
            <person name="Borriss R."/>
            <person name="Boursier L."/>
            <person name="Brans A."/>
            <person name="Braun M."/>
            <person name="Brignell S.C."/>
            <person name="Bron S."/>
            <person name="Brouillet S."/>
            <person name="Bruschi C.V."/>
            <person name="Caldwell B."/>
            <person name="Capuano V."/>
            <person name="Carter N.M."/>
            <person name="Choi S.-K."/>
            <person name="Codani J.-J."/>
            <person name="Connerton I.F."/>
            <person name="Cummings N.J."/>
            <person name="Daniel R.A."/>
            <person name="Denizot F."/>
            <person name="Devine K.M."/>
            <person name="Duesterhoeft A."/>
            <person name="Ehrlich S.D."/>
            <person name="Emmerson P.T."/>
            <person name="Entian K.-D."/>
            <person name="Errington J."/>
            <person name="Fabret C."/>
            <person name="Ferrari E."/>
            <person name="Foulger D."/>
            <person name="Fritz C."/>
            <person name="Fujita M."/>
            <person name="Fujita Y."/>
            <person name="Fuma S."/>
            <person name="Galizzi A."/>
            <person name="Galleron N."/>
            <person name="Ghim S.-Y."/>
            <person name="Glaser P."/>
            <person name="Goffeau A."/>
            <person name="Golightly E.J."/>
            <person name="Grandi G."/>
            <person name="Guiseppi G."/>
            <person name="Guy B.J."/>
            <person name="Haga K."/>
            <person name="Haiech J."/>
            <person name="Harwood C.R."/>
            <person name="Henaut A."/>
            <person name="Hilbert H."/>
            <person name="Holsappel S."/>
            <person name="Hosono S."/>
            <person name="Hullo M.-F."/>
            <person name="Itaya M."/>
            <person name="Jones L.-M."/>
            <person name="Joris B."/>
            <person name="Karamata D."/>
            <person name="Kasahara Y."/>
            <person name="Klaerr-Blanchard M."/>
            <person name="Klein C."/>
            <person name="Kobayashi Y."/>
            <person name="Koetter P."/>
            <person name="Koningstein G."/>
            <person name="Krogh S."/>
            <person name="Kumano M."/>
            <person name="Kurita K."/>
            <person name="Lapidus A."/>
            <person name="Lardinois S."/>
            <person name="Lauber J."/>
            <person name="Lazarevic V."/>
            <person name="Lee S.-M."/>
            <person name="Levine A."/>
            <person name="Liu H."/>
            <person name="Masuda S."/>
            <person name="Mauel C."/>
            <person name="Medigue C."/>
            <person name="Medina N."/>
            <person name="Mellado R.P."/>
            <person name="Mizuno M."/>
            <person name="Moestl D."/>
            <person name="Nakai S."/>
            <person name="Noback M."/>
            <person name="Noone D."/>
            <person name="O'Reilly M."/>
            <person name="Ogawa K."/>
            <person name="Ogiwara A."/>
            <person name="Oudega B."/>
            <person name="Park S.-H."/>
            <person name="Parro V."/>
            <person name="Pohl T.M."/>
            <person name="Portetelle D."/>
            <person name="Porwollik S."/>
            <person name="Prescott A.M."/>
            <person name="Presecan E."/>
            <person name="Pujic P."/>
            <person name="Purnelle B."/>
            <person name="Rapoport G."/>
            <person name="Rey M."/>
            <person name="Reynolds S."/>
            <person name="Rieger M."/>
            <person name="Rivolta C."/>
            <person name="Rocha E."/>
            <person name="Roche B."/>
            <person name="Rose M."/>
            <person name="Sadaie Y."/>
            <person name="Sato T."/>
            <person name="Scanlan E."/>
            <person name="Schleich S."/>
            <person name="Schroeter R."/>
            <person name="Scoffone F."/>
            <person name="Sekiguchi J."/>
            <person name="Sekowska A."/>
            <person name="Seror S.J."/>
            <person name="Serror P."/>
            <person name="Shin B.-S."/>
            <person name="Soldo B."/>
            <person name="Sorokin A."/>
            <person name="Tacconi E."/>
            <person name="Takagi T."/>
            <person name="Takahashi H."/>
            <person name="Takemaru K."/>
            <person name="Takeuchi M."/>
            <person name="Tamakoshi A."/>
            <person name="Tanaka T."/>
            <person name="Terpstra P."/>
            <person name="Tognoni A."/>
            <person name="Tosato V."/>
            <person name="Uchiyama S."/>
            <person name="Vandenbol M."/>
            <person name="Vannier F."/>
            <person name="Vassarotti A."/>
            <person name="Viari A."/>
            <person name="Wambutt R."/>
            <person name="Wedler E."/>
            <person name="Wedler H."/>
            <person name="Weitzenegger T."/>
            <person name="Winters P."/>
            <person name="Wipat A."/>
            <person name="Yamamoto H."/>
            <person name="Yamane K."/>
            <person name="Yasumoto K."/>
            <person name="Yata K."/>
            <person name="Yoshida K."/>
            <person name="Yoshikawa H.-F."/>
            <person name="Zumstein E."/>
            <person name="Yoshikawa H."/>
            <person name="Danchin A."/>
        </authorList>
    </citation>
    <scope>NUCLEOTIDE SEQUENCE [LARGE SCALE GENOMIC DNA]</scope>
    <source>
        <strain>168</strain>
    </source>
</reference>
<reference key="3">
    <citation type="journal article" date="1988" name="Gene">
        <title>Characterization of signal-sequence-coding regions selected from the Bacillus subtilis chromosome.</title>
        <authorList>
            <person name="Smith H."/>
            <person name="de Jong A."/>
            <person name="Bron S."/>
            <person name="Venema G."/>
        </authorList>
    </citation>
    <scope>NUCLEOTIDE SEQUENCE [GENOMIC DNA] OF 87-173</scope>
</reference>
<gene>
    <name type="primary">yprB</name>
    <name type="ordered locus">BSU22210</name>
</gene>
<name>YPRB_BACSU</name>
<evidence type="ECO:0007829" key="1">
    <source>
        <dbReference type="PDB" id="8UN9"/>
    </source>
</evidence>